<reference key="1">
    <citation type="journal article" date="2007" name="Genes Dev.">
        <title>New insights into Acinetobacter baumannii pathogenesis revealed by high-density pyrosequencing and transposon mutagenesis.</title>
        <authorList>
            <person name="Smith M.G."/>
            <person name="Gianoulis T.A."/>
            <person name="Pukatzki S."/>
            <person name="Mekalanos J.J."/>
            <person name="Ornston L.N."/>
            <person name="Gerstein M."/>
            <person name="Snyder M."/>
        </authorList>
    </citation>
    <scope>NUCLEOTIDE SEQUENCE [LARGE SCALE GENOMIC DNA]</scope>
    <source>
        <strain>ATCC 17978 / DSM 105126 / CIP 53.77 / LMG 1025 / NCDC KC755 / 5377</strain>
    </source>
</reference>
<dbReference type="EC" id="1.4.3.5" evidence="1"/>
<dbReference type="EMBL" id="CP000521">
    <property type="protein sequence ID" value="ABO13708.2"/>
    <property type="molecule type" value="Genomic_DNA"/>
</dbReference>
<dbReference type="RefSeq" id="WP_001286115.1">
    <property type="nucleotide sequence ID" value="NZ_CP053098.1"/>
</dbReference>
<dbReference type="SMR" id="A3M9W4"/>
<dbReference type="KEGG" id="acb:A1S_3319"/>
<dbReference type="HOGENOM" id="CLU_032263_2_2_6"/>
<dbReference type="UniPathway" id="UPA01068">
    <property type="reaction ID" value="UER00304"/>
</dbReference>
<dbReference type="UniPathway" id="UPA01068">
    <property type="reaction ID" value="UER00305"/>
</dbReference>
<dbReference type="GO" id="GO:0010181">
    <property type="term" value="F:FMN binding"/>
    <property type="evidence" value="ECO:0007669"/>
    <property type="project" value="UniProtKB-UniRule"/>
</dbReference>
<dbReference type="GO" id="GO:0004733">
    <property type="term" value="F:pyridoxamine phosphate oxidase activity"/>
    <property type="evidence" value="ECO:0007669"/>
    <property type="project" value="UniProtKB-UniRule"/>
</dbReference>
<dbReference type="GO" id="GO:0008615">
    <property type="term" value="P:pyridoxine biosynthetic process"/>
    <property type="evidence" value="ECO:0007669"/>
    <property type="project" value="UniProtKB-KW"/>
</dbReference>
<dbReference type="Gene3D" id="2.30.110.10">
    <property type="entry name" value="Electron Transport, Fmn-binding Protein, Chain A"/>
    <property type="match status" value="1"/>
</dbReference>
<dbReference type="HAMAP" id="MF_01629">
    <property type="entry name" value="PdxH"/>
    <property type="match status" value="1"/>
</dbReference>
<dbReference type="InterPro" id="IPR000659">
    <property type="entry name" value="Pyridox_Oxase"/>
</dbReference>
<dbReference type="InterPro" id="IPR019740">
    <property type="entry name" value="Pyridox_Oxase_CS"/>
</dbReference>
<dbReference type="InterPro" id="IPR011576">
    <property type="entry name" value="Pyridox_Oxase_N"/>
</dbReference>
<dbReference type="InterPro" id="IPR019576">
    <property type="entry name" value="Pyridoxamine_oxidase_dimer_C"/>
</dbReference>
<dbReference type="InterPro" id="IPR012349">
    <property type="entry name" value="Split_barrel_FMN-bd"/>
</dbReference>
<dbReference type="NCBIfam" id="TIGR00558">
    <property type="entry name" value="pdxH"/>
    <property type="match status" value="1"/>
</dbReference>
<dbReference type="NCBIfam" id="NF004231">
    <property type="entry name" value="PRK05679.1"/>
    <property type="match status" value="1"/>
</dbReference>
<dbReference type="PANTHER" id="PTHR10851:SF0">
    <property type="entry name" value="PYRIDOXINE-5'-PHOSPHATE OXIDASE"/>
    <property type="match status" value="1"/>
</dbReference>
<dbReference type="PANTHER" id="PTHR10851">
    <property type="entry name" value="PYRIDOXINE-5-PHOSPHATE OXIDASE"/>
    <property type="match status" value="1"/>
</dbReference>
<dbReference type="Pfam" id="PF10590">
    <property type="entry name" value="PNP_phzG_C"/>
    <property type="match status" value="1"/>
</dbReference>
<dbReference type="Pfam" id="PF01243">
    <property type="entry name" value="PNPOx_N"/>
    <property type="match status" value="1"/>
</dbReference>
<dbReference type="PIRSF" id="PIRSF000190">
    <property type="entry name" value="Pyd_amn-ph_oxd"/>
    <property type="match status" value="1"/>
</dbReference>
<dbReference type="SUPFAM" id="SSF50475">
    <property type="entry name" value="FMN-binding split barrel"/>
    <property type="match status" value="1"/>
</dbReference>
<dbReference type="PROSITE" id="PS01064">
    <property type="entry name" value="PYRIDOX_OXIDASE"/>
    <property type="match status" value="1"/>
</dbReference>
<keyword id="KW-0285">Flavoprotein</keyword>
<keyword id="KW-0288">FMN</keyword>
<keyword id="KW-0560">Oxidoreductase</keyword>
<keyword id="KW-0664">Pyridoxine biosynthesis</keyword>
<proteinExistence type="inferred from homology"/>
<comment type="function">
    <text evidence="1">Catalyzes the oxidation of either pyridoxine 5'-phosphate (PNP) or pyridoxamine 5'-phosphate (PMP) into pyridoxal 5'-phosphate (PLP).</text>
</comment>
<comment type="catalytic activity">
    <reaction evidence="1">
        <text>pyridoxamine 5'-phosphate + O2 + H2O = pyridoxal 5'-phosphate + H2O2 + NH4(+)</text>
        <dbReference type="Rhea" id="RHEA:15817"/>
        <dbReference type="ChEBI" id="CHEBI:15377"/>
        <dbReference type="ChEBI" id="CHEBI:15379"/>
        <dbReference type="ChEBI" id="CHEBI:16240"/>
        <dbReference type="ChEBI" id="CHEBI:28938"/>
        <dbReference type="ChEBI" id="CHEBI:58451"/>
        <dbReference type="ChEBI" id="CHEBI:597326"/>
        <dbReference type="EC" id="1.4.3.5"/>
    </reaction>
</comment>
<comment type="catalytic activity">
    <reaction evidence="1">
        <text>pyridoxine 5'-phosphate + O2 = pyridoxal 5'-phosphate + H2O2</text>
        <dbReference type="Rhea" id="RHEA:15149"/>
        <dbReference type="ChEBI" id="CHEBI:15379"/>
        <dbReference type="ChEBI" id="CHEBI:16240"/>
        <dbReference type="ChEBI" id="CHEBI:58589"/>
        <dbReference type="ChEBI" id="CHEBI:597326"/>
        <dbReference type="EC" id="1.4.3.5"/>
    </reaction>
</comment>
<comment type="cofactor">
    <cofactor evidence="1">
        <name>FMN</name>
        <dbReference type="ChEBI" id="CHEBI:58210"/>
    </cofactor>
    <text evidence="1">Binds 1 FMN per subunit.</text>
</comment>
<comment type="pathway">
    <text evidence="1">Cofactor metabolism; pyridoxal 5'-phosphate salvage; pyridoxal 5'-phosphate from pyridoxamine 5'-phosphate: step 1/1.</text>
</comment>
<comment type="pathway">
    <text evidence="1">Cofactor metabolism; pyridoxal 5'-phosphate salvage; pyridoxal 5'-phosphate from pyridoxine 5'-phosphate: step 1/1.</text>
</comment>
<comment type="subunit">
    <text evidence="1">Homodimer.</text>
</comment>
<comment type="similarity">
    <text evidence="1">Belongs to the pyridoxamine 5'-phosphate oxidase family.</text>
</comment>
<organism>
    <name type="scientific">Acinetobacter baumannii (strain ATCC 17978 / DSM 105126 / CIP 53.77 / LMG 1025 / NCDC KC755 / 5377)</name>
    <dbReference type="NCBI Taxonomy" id="400667"/>
    <lineage>
        <taxon>Bacteria</taxon>
        <taxon>Pseudomonadati</taxon>
        <taxon>Pseudomonadota</taxon>
        <taxon>Gammaproteobacteria</taxon>
        <taxon>Moraxellales</taxon>
        <taxon>Moraxellaceae</taxon>
        <taxon>Acinetobacter</taxon>
        <taxon>Acinetobacter calcoaceticus/baumannii complex</taxon>
    </lineage>
</organism>
<evidence type="ECO:0000255" key="1">
    <source>
        <dbReference type="HAMAP-Rule" id="MF_01629"/>
    </source>
</evidence>
<gene>
    <name evidence="1" type="primary">pdxH</name>
    <name type="ordered locus">A1S_3319</name>
</gene>
<accession>A3M9W4</accession>
<protein>
    <recommendedName>
        <fullName evidence="1">Pyridoxine/pyridoxamine 5'-phosphate oxidase</fullName>
        <ecNumber evidence="1">1.4.3.5</ecNumber>
    </recommendedName>
    <alternativeName>
        <fullName evidence="1">PNP/PMP oxidase</fullName>
        <shortName evidence="1">PNPOx</shortName>
    </alternativeName>
    <alternativeName>
        <fullName evidence="1">Pyridoxal 5'-phosphate synthase</fullName>
    </alternativeName>
</protein>
<sequence length="218" mass="25474">MSDVIKDLSELRLSYEQGELYETQVASNPHEQFLGWFNHALAANLHEPYAMSLATASASGRPHVRTVLLRGATEAGYDFYTNYDSQKGIDLAENPYAELLFYWPSLERQVRVGGHVVKIPEQESTDYYHKRPRDSQIAAHISTPQSGKIESRELLQQRFQDLQQQVQSREVLDKPEFWGGYRLQPDYYEFWQGRPNRLHDRLSYEKIDGQWTLHRLMP</sequence>
<feature type="chain" id="PRO_1000186282" description="Pyridoxine/pyridoxamine 5'-phosphate oxidase">
    <location>
        <begin position="1"/>
        <end position="218"/>
    </location>
</feature>
<feature type="binding site" evidence="1">
    <location>
        <begin position="12"/>
        <end position="15"/>
    </location>
    <ligand>
        <name>substrate</name>
    </ligand>
</feature>
<feature type="binding site" evidence="1">
    <location>
        <begin position="65"/>
        <end position="70"/>
    </location>
    <ligand>
        <name>FMN</name>
        <dbReference type="ChEBI" id="CHEBI:58210"/>
    </ligand>
</feature>
<feature type="binding site" evidence="1">
    <location>
        <position position="70"/>
    </location>
    <ligand>
        <name>substrate</name>
    </ligand>
</feature>
<feature type="binding site" evidence="1">
    <location>
        <begin position="80"/>
        <end position="81"/>
    </location>
    <ligand>
        <name>FMN</name>
        <dbReference type="ChEBI" id="CHEBI:58210"/>
    </ligand>
</feature>
<feature type="binding site" evidence="1">
    <location>
        <position position="87"/>
    </location>
    <ligand>
        <name>FMN</name>
        <dbReference type="ChEBI" id="CHEBI:58210"/>
    </ligand>
</feature>
<feature type="binding site" evidence="1">
    <location>
        <position position="109"/>
    </location>
    <ligand>
        <name>FMN</name>
        <dbReference type="ChEBI" id="CHEBI:58210"/>
    </ligand>
</feature>
<feature type="binding site" evidence="1">
    <location>
        <position position="127"/>
    </location>
    <ligand>
        <name>substrate</name>
    </ligand>
</feature>
<feature type="binding site" evidence="1">
    <location>
        <position position="131"/>
    </location>
    <ligand>
        <name>substrate</name>
    </ligand>
</feature>
<feature type="binding site" evidence="1">
    <location>
        <position position="135"/>
    </location>
    <ligand>
        <name>substrate</name>
    </ligand>
</feature>
<feature type="binding site" evidence="1">
    <location>
        <begin position="145"/>
        <end position="146"/>
    </location>
    <ligand>
        <name>FMN</name>
        <dbReference type="ChEBI" id="CHEBI:58210"/>
    </ligand>
</feature>
<feature type="binding site" evidence="1">
    <location>
        <position position="191"/>
    </location>
    <ligand>
        <name>FMN</name>
        <dbReference type="ChEBI" id="CHEBI:58210"/>
    </ligand>
</feature>
<feature type="binding site" evidence="1">
    <location>
        <begin position="197"/>
        <end position="199"/>
    </location>
    <ligand>
        <name>substrate</name>
    </ligand>
</feature>
<feature type="binding site" evidence="1">
    <location>
        <position position="201"/>
    </location>
    <ligand>
        <name>FMN</name>
        <dbReference type="ChEBI" id="CHEBI:58210"/>
    </ligand>
</feature>
<name>PDXH_ACIBT</name>